<gene>
    <name evidence="1" type="primary">lpxD</name>
    <name type="ordered locus">COXBURSA331_A0726</name>
</gene>
<feature type="chain" id="PRO_1000081688" description="UDP-3-O-acylglucosamine N-acyltransferase">
    <location>
        <begin position="1"/>
        <end position="342"/>
    </location>
</feature>
<feature type="active site" description="Proton acceptor" evidence="1">
    <location>
        <position position="243"/>
    </location>
</feature>
<evidence type="ECO:0000255" key="1">
    <source>
        <dbReference type="HAMAP-Rule" id="MF_00523"/>
    </source>
</evidence>
<name>LPXD_COXBR</name>
<proteinExistence type="inferred from homology"/>
<accession>A9NC98</accession>
<dbReference type="EC" id="2.3.1.191" evidence="1"/>
<dbReference type="EMBL" id="CP000890">
    <property type="protein sequence ID" value="ABX77637.1"/>
    <property type="molecule type" value="Genomic_DNA"/>
</dbReference>
<dbReference type="RefSeq" id="WP_005771660.1">
    <property type="nucleotide sequence ID" value="NC_010117.1"/>
</dbReference>
<dbReference type="SMR" id="A9NC98"/>
<dbReference type="KEGG" id="cbs:COXBURSA331_A0726"/>
<dbReference type="HOGENOM" id="CLU_049865_0_1_6"/>
<dbReference type="UniPathway" id="UPA00973"/>
<dbReference type="GO" id="GO:0016020">
    <property type="term" value="C:membrane"/>
    <property type="evidence" value="ECO:0007669"/>
    <property type="project" value="GOC"/>
</dbReference>
<dbReference type="GO" id="GO:0016410">
    <property type="term" value="F:N-acyltransferase activity"/>
    <property type="evidence" value="ECO:0007669"/>
    <property type="project" value="InterPro"/>
</dbReference>
<dbReference type="GO" id="GO:0009245">
    <property type="term" value="P:lipid A biosynthetic process"/>
    <property type="evidence" value="ECO:0007669"/>
    <property type="project" value="UniProtKB-UniRule"/>
</dbReference>
<dbReference type="CDD" id="cd03352">
    <property type="entry name" value="LbH_LpxD"/>
    <property type="match status" value="1"/>
</dbReference>
<dbReference type="Gene3D" id="1.20.5.170">
    <property type="match status" value="1"/>
</dbReference>
<dbReference type="Gene3D" id="2.160.10.10">
    <property type="entry name" value="Hexapeptide repeat proteins"/>
    <property type="match status" value="1"/>
</dbReference>
<dbReference type="Gene3D" id="3.40.1390.10">
    <property type="entry name" value="MurE/MurF, N-terminal domain"/>
    <property type="match status" value="1"/>
</dbReference>
<dbReference type="HAMAP" id="MF_00523">
    <property type="entry name" value="LpxD"/>
    <property type="match status" value="1"/>
</dbReference>
<dbReference type="InterPro" id="IPR001451">
    <property type="entry name" value="Hexapep"/>
</dbReference>
<dbReference type="InterPro" id="IPR007691">
    <property type="entry name" value="LpxD"/>
</dbReference>
<dbReference type="InterPro" id="IPR011004">
    <property type="entry name" value="Trimer_LpxA-like_sf"/>
</dbReference>
<dbReference type="InterPro" id="IPR020573">
    <property type="entry name" value="UDP_GlcNAc_AcTrfase_non-rep"/>
</dbReference>
<dbReference type="NCBIfam" id="TIGR01853">
    <property type="entry name" value="lipid_A_lpxD"/>
    <property type="match status" value="1"/>
</dbReference>
<dbReference type="NCBIfam" id="NF002060">
    <property type="entry name" value="PRK00892.1"/>
    <property type="match status" value="1"/>
</dbReference>
<dbReference type="PANTHER" id="PTHR43378">
    <property type="entry name" value="UDP-3-O-ACYLGLUCOSAMINE N-ACYLTRANSFERASE"/>
    <property type="match status" value="1"/>
</dbReference>
<dbReference type="PANTHER" id="PTHR43378:SF2">
    <property type="entry name" value="UDP-3-O-ACYLGLUCOSAMINE N-ACYLTRANSFERASE 1, MITOCHONDRIAL-RELATED"/>
    <property type="match status" value="1"/>
</dbReference>
<dbReference type="Pfam" id="PF00132">
    <property type="entry name" value="Hexapep"/>
    <property type="match status" value="3"/>
</dbReference>
<dbReference type="Pfam" id="PF14602">
    <property type="entry name" value="Hexapep_2"/>
    <property type="match status" value="1"/>
</dbReference>
<dbReference type="Pfam" id="PF04613">
    <property type="entry name" value="LpxD"/>
    <property type="match status" value="1"/>
</dbReference>
<dbReference type="SUPFAM" id="SSF51161">
    <property type="entry name" value="Trimeric LpxA-like enzymes"/>
    <property type="match status" value="1"/>
</dbReference>
<protein>
    <recommendedName>
        <fullName evidence="1">UDP-3-O-acylglucosamine N-acyltransferase</fullName>
        <ecNumber evidence="1">2.3.1.191</ecNumber>
    </recommendedName>
</protein>
<reference key="1">
    <citation type="submission" date="2007-11" db="EMBL/GenBank/DDBJ databases">
        <title>Genome sequencing of phylogenetically and phenotypically diverse Coxiella burnetii isolates.</title>
        <authorList>
            <person name="Seshadri R."/>
            <person name="Samuel J.E."/>
        </authorList>
    </citation>
    <scope>NUCLEOTIDE SEQUENCE [LARGE SCALE GENOMIC DNA]</scope>
    <source>
        <strain>RSA 331 / Henzerling II</strain>
    </source>
</reference>
<comment type="function">
    <text evidence="1">Catalyzes the N-acylation of UDP-3-O-acylglucosamine using 3-hydroxyacyl-ACP as the acyl donor. Is involved in the biosynthesis of lipid A, a phosphorylated glycolipid that anchors the lipopolysaccharide to the outer membrane of the cell.</text>
</comment>
<comment type="catalytic activity">
    <reaction evidence="1">
        <text>a UDP-3-O-[(3R)-3-hydroxyacyl]-alpha-D-glucosamine + a (3R)-hydroxyacyl-[ACP] = a UDP-2-N,3-O-bis[(3R)-3-hydroxyacyl]-alpha-D-glucosamine + holo-[ACP] + H(+)</text>
        <dbReference type="Rhea" id="RHEA:53836"/>
        <dbReference type="Rhea" id="RHEA-COMP:9685"/>
        <dbReference type="Rhea" id="RHEA-COMP:9945"/>
        <dbReference type="ChEBI" id="CHEBI:15378"/>
        <dbReference type="ChEBI" id="CHEBI:64479"/>
        <dbReference type="ChEBI" id="CHEBI:78827"/>
        <dbReference type="ChEBI" id="CHEBI:137740"/>
        <dbReference type="ChEBI" id="CHEBI:137748"/>
        <dbReference type="EC" id="2.3.1.191"/>
    </reaction>
</comment>
<comment type="pathway">
    <text evidence="1">Bacterial outer membrane biogenesis; LPS lipid A biosynthesis.</text>
</comment>
<comment type="subunit">
    <text evidence="1">Homotrimer.</text>
</comment>
<comment type="similarity">
    <text evidence="1">Belongs to the transferase hexapeptide repeat family. LpxD subfamily.</text>
</comment>
<keyword id="KW-0012">Acyltransferase</keyword>
<keyword id="KW-0441">Lipid A biosynthesis</keyword>
<keyword id="KW-0444">Lipid biosynthesis</keyword>
<keyword id="KW-0443">Lipid metabolism</keyword>
<keyword id="KW-0677">Repeat</keyword>
<keyword id="KW-0808">Transferase</keyword>
<sequence length="342" mass="36272">MTRGLTYSLTELATAIGATVQGDGDCKIHNVAAIAQAQPGEISFVTDRKYRKYLTQTKASAILLDEKLASRCPINALVMSNPKLGFAKLLTLLRPQSLPTGGIHPTAVVGANCQIDPSAHIGAHVVIEEDVVIGPRTLIGAGASIGRGSQIGSDCCLHSRVTLYSQTRIGDRSIIHSGAVIGADGFGLIQDEKGEWVKIPQVGRVIIGDDVEIGANATIDRGALDDTVIGNGVKIDDLVMIAHNVRIGDHTVIAGCAGVAGSTTVGRHCMIGASAGLNGHIEICDNVIITGMGMIQKSITKPGIYSSGTGMQTNREWRKSVIRFWQLDELAKRLKRLEKLIR</sequence>
<organism>
    <name type="scientific">Coxiella burnetii (strain RSA 331 / Henzerling II)</name>
    <dbReference type="NCBI Taxonomy" id="360115"/>
    <lineage>
        <taxon>Bacteria</taxon>
        <taxon>Pseudomonadati</taxon>
        <taxon>Pseudomonadota</taxon>
        <taxon>Gammaproteobacteria</taxon>
        <taxon>Legionellales</taxon>
        <taxon>Coxiellaceae</taxon>
        <taxon>Coxiella</taxon>
    </lineage>
</organism>